<sequence length="804" mass="88360">QMQVFQMITKSQRIFSHAQVSKASSQLPAPEGKPAALRPLQGPWPQQLPPLAPAVDSLNAGPGNPEAEGSPARRRKTTPGVAREASPGNTRRDAKGGLKVAAVPTPLAAPSLDPSRNPDISSLAKQLRSSKGTLDLGDIFPSTGQRQTQLGGEELPGASLPGKQAPAENGAVSGTTKGEKGPPCSRGGGYRLLGNPRAPRFSGFRKEKAKMDMCCAASPSQVAMASFSSAGPPADPSKSKLTIFSRIQGGNIYRLPHPVKEENVAGGGNQQNGGSTDWTEPRSTFICKNCSQMFYTEKGLSSHMCFHSDQWPSPRGKQEPQVFGTEFCKPLRQVLRPEGDRHSPPGAKKPLDSTAAAPLVVPHSIPVVPVTRHVGSMAMEQEKDGEERDSKESSQQRKRKKRPPPKRLFIPPPPSTAGEPGPAGCHQSRLRSPMFLVDRLLKGLFQCSPYTPPPMLSPIREGSGVYFNTLCSTSTQASPDQLISSMLDQVDGSFGICVVKDDTKISIEPHINIGSRFQAEIPELQERSLAGIDEHVASLVWKPWGDMMINPETQDRVTELCNVACSSVMPGGGTNLELALHCLHEAQGNVQVALETLLLRGPHKPPTHLLADYRYTGSDVWTPIEKRLFKKAFYAHKKDFYLIHKTIQTKTVAQCVEYYYIWKKMIKFDCGRAPGLEKRVKREPEEVERTEEKVPCSPRERPSHHPIPELKIKTKSYRRESILSSSPNAGPKRTPEPSGSVESQGIFPCRECERVFDKIKSRNAHMKRHRLQDHVEPIVRVKWPVKPFQLKEEELGADIGPLQW</sequence>
<reference key="1">
    <citation type="submission" date="2005-06" db="EMBL/GenBank/DDBJ databases">
        <title>DNA sequences of macaque genes expressed in brain or testis and its evolutionary implications.</title>
        <authorList>
            <consortium name="International consortium for macaque cDNA sequencing and analysis"/>
        </authorList>
    </citation>
    <scope>NUCLEOTIDE SEQUENCE [LARGE SCALE MRNA]</scope>
    <source>
        <tissue>Testis</tissue>
    </source>
</reference>
<name>ZN541_MACFA</name>
<comment type="function">
    <text evidence="1">Transcription regulator which is essential for male fertility and for the completion of meiotic prophase in spermatocytes. Regulates progression of the pachytene stage of meiotic prophase by activating the expression of genes involved in meiosis and post-meiosis during spermatogenesis. Maintains the repression of pre-pachytene transcriptional programs, including meiotic double-strand breaks (DSB) formation genes in pachytene spermatocytes and suppresses aberrant DSB formation after mid-pachytene, thus ensuring meiosis progression.</text>
</comment>
<comment type="subunit">
    <text evidence="1 2">Interacts with DNTTIP1. Identified in a complex with KCDT19, HDAC1 and HSPA2s. Component of a histone deacetylase complex containing DNTTIP1, ZNF541, HDAC1 and HDAC2. Identified in a complex with HDAC1, HDAC2, DNTTIP1 and KCTD19.</text>
</comment>
<comment type="subcellular location">
    <subcellularLocation>
        <location evidence="1 4 5">Nucleus</location>
    </subcellularLocation>
</comment>
<comment type="sequence caution" evidence="7">
    <conflict type="erroneous initiation">
        <sequence resource="EMBL-CDS" id="BAE02521"/>
    </conflict>
</comment>
<comment type="sequence caution" evidence="7">
    <conflict type="erroneous initiation">
        <sequence resource="EMBL-CDS" id="BAE02521"/>
    </conflict>
    <text>Truncated N-terminus.</text>
</comment>
<proteinExistence type="evidence at transcript level"/>
<keyword id="KW-0010">Activator</keyword>
<keyword id="KW-0217">Developmental protein</keyword>
<keyword id="KW-0221">Differentiation</keyword>
<keyword id="KW-0469">Meiosis</keyword>
<keyword id="KW-0479">Metal-binding</keyword>
<keyword id="KW-0539">Nucleus</keyword>
<keyword id="KW-1185">Reference proteome</keyword>
<keyword id="KW-0677">Repeat</keyword>
<keyword id="KW-0678">Repressor</keyword>
<keyword id="KW-0744">Spermatogenesis</keyword>
<keyword id="KW-0804">Transcription</keyword>
<keyword id="KW-0805">Transcription regulation</keyword>
<keyword id="KW-0862">Zinc</keyword>
<keyword id="KW-0863">Zinc-finger</keyword>
<gene>
    <name type="primary">ZNF541</name>
    <name type="ORF">QtsA-20632</name>
</gene>
<accession>Q4R2Z8</accession>
<protein>
    <recommendedName>
        <fullName>Zinc finger protein 541</fullName>
    </recommendedName>
</protein>
<evidence type="ECO:0000250" key="1">
    <source>
        <dbReference type="UniProtKB" id="Q0GGX2"/>
    </source>
</evidence>
<evidence type="ECO:0000250" key="2">
    <source>
        <dbReference type="UniProtKB" id="Q9H0D2"/>
    </source>
</evidence>
<evidence type="ECO:0000255" key="3">
    <source>
        <dbReference type="PROSITE-ProRule" id="PRU00042"/>
    </source>
</evidence>
<evidence type="ECO:0000255" key="4">
    <source>
        <dbReference type="PROSITE-ProRule" id="PRU00512"/>
    </source>
</evidence>
<evidence type="ECO:0000255" key="5">
    <source>
        <dbReference type="PROSITE-ProRule" id="PRU00624"/>
    </source>
</evidence>
<evidence type="ECO:0000256" key="6">
    <source>
        <dbReference type="SAM" id="MobiDB-lite"/>
    </source>
</evidence>
<evidence type="ECO:0000305" key="7"/>
<feature type="chain" id="PRO_0000197137" description="Zinc finger protein 541">
    <location>
        <begin position="1" status="less than"/>
        <end position="804"/>
    </location>
</feature>
<feature type="domain" description="ELM2" evidence="4">
    <location>
        <begin position="509"/>
        <end position="601"/>
    </location>
</feature>
<feature type="domain" description="SANT" evidence="5">
    <location>
        <begin position="616"/>
        <end position="667"/>
    </location>
</feature>
<feature type="zinc finger region" description="C2H2-type 1" evidence="3">
    <location>
        <begin position="285"/>
        <end position="307"/>
    </location>
</feature>
<feature type="zinc finger region" description="C2H2-type 2" evidence="3">
    <location>
        <begin position="747"/>
        <end position="769"/>
    </location>
</feature>
<feature type="region of interest" description="Disordered" evidence="6">
    <location>
        <begin position="21"/>
        <end position="120"/>
    </location>
</feature>
<feature type="region of interest" description="Disordered" evidence="6">
    <location>
        <begin position="133"/>
        <end position="197"/>
    </location>
</feature>
<feature type="region of interest" description="Disordered" evidence="6">
    <location>
        <begin position="379"/>
        <end position="426"/>
    </location>
</feature>
<feature type="region of interest" description="Disordered" evidence="6">
    <location>
        <begin position="680"/>
        <end position="743"/>
    </location>
</feature>
<feature type="compositionally biased region" description="Basic and acidic residues" evidence="6">
    <location>
        <begin position="380"/>
        <end position="395"/>
    </location>
</feature>
<feature type="compositionally biased region" description="Basic residues" evidence="6">
    <location>
        <begin position="396"/>
        <end position="405"/>
    </location>
</feature>
<feature type="compositionally biased region" description="Basic and acidic residues" evidence="6">
    <location>
        <begin position="690"/>
        <end position="721"/>
    </location>
</feature>
<feature type="non-terminal residue">
    <location>
        <position position="1"/>
    </location>
</feature>
<dbReference type="EMBL" id="AB179470">
    <property type="protein sequence ID" value="BAE02521.1"/>
    <property type="status" value="ALT_INIT"/>
    <property type="molecule type" value="mRNA"/>
</dbReference>
<dbReference type="SMR" id="Q4R2Z8"/>
<dbReference type="STRING" id="9541.ENSMFAP00000010725"/>
<dbReference type="eggNOG" id="KOG1721">
    <property type="taxonomic scope" value="Eukaryota"/>
</dbReference>
<dbReference type="eggNOG" id="KOG4167">
    <property type="taxonomic scope" value="Eukaryota"/>
</dbReference>
<dbReference type="Proteomes" id="UP000233100">
    <property type="component" value="Unplaced"/>
</dbReference>
<dbReference type="GO" id="GO:0000118">
    <property type="term" value="C:histone deacetylase complex"/>
    <property type="evidence" value="ECO:0000250"/>
    <property type="project" value="UniProtKB"/>
</dbReference>
<dbReference type="GO" id="GO:0005634">
    <property type="term" value="C:nucleus"/>
    <property type="evidence" value="ECO:0000250"/>
    <property type="project" value="UniProtKB"/>
</dbReference>
<dbReference type="GO" id="GO:0005667">
    <property type="term" value="C:transcription regulator complex"/>
    <property type="evidence" value="ECO:0007669"/>
    <property type="project" value="TreeGrafter"/>
</dbReference>
<dbReference type="GO" id="GO:0003714">
    <property type="term" value="F:transcription corepressor activity"/>
    <property type="evidence" value="ECO:0007669"/>
    <property type="project" value="TreeGrafter"/>
</dbReference>
<dbReference type="GO" id="GO:0008270">
    <property type="term" value="F:zinc ion binding"/>
    <property type="evidence" value="ECO:0007669"/>
    <property type="project" value="UniProtKB-KW"/>
</dbReference>
<dbReference type="GO" id="GO:0030154">
    <property type="term" value="P:cell differentiation"/>
    <property type="evidence" value="ECO:0007669"/>
    <property type="project" value="UniProtKB-KW"/>
</dbReference>
<dbReference type="GO" id="GO:0007140">
    <property type="term" value="P:male meiotic nuclear division"/>
    <property type="evidence" value="ECO:0000250"/>
    <property type="project" value="UniProtKB"/>
</dbReference>
<dbReference type="GO" id="GO:0045892">
    <property type="term" value="P:negative regulation of DNA-templated transcription"/>
    <property type="evidence" value="ECO:0000250"/>
    <property type="project" value="UniProtKB"/>
</dbReference>
<dbReference type="GO" id="GO:0045893">
    <property type="term" value="P:positive regulation of DNA-templated transcription"/>
    <property type="evidence" value="ECO:0000250"/>
    <property type="project" value="UniProtKB"/>
</dbReference>
<dbReference type="GO" id="GO:0006355">
    <property type="term" value="P:regulation of DNA-templated transcription"/>
    <property type="evidence" value="ECO:0000250"/>
    <property type="project" value="UniProtKB"/>
</dbReference>
<dbReference type="GO" id="GO:0006357">
    <property type="term" value="P:regulation of transcription by RNA polymerase II"/>
    <property type="evidence" value="ECO:0007669"/>
    <property type="project" value="TreeGrafter"/>
</dbReference>
<dbReference type="GO" id="GO:0007283">
    <property type="term" value="P:spermatogenesis"/>
    <property type="evidence" value="ECO:0007669"/>
    <property type="project" value="UniProtKB-KW"/>
</dbReference>
<dbReference type="FunFam" id="1.10.10.60:FF:000251">
    <property type="entry name" value="Zinc finger protein 541"/>
    <property type="match status" value="1"/>
</dbReference>
<dbReference type="Gene3D" id="1.10.10.60">
    <property type="entry name" value="Homeodomain-like"/>
    <property type="match status" value="1"/>
</dbReference>
<dbReference type="InterPro" id="IPR000949">
    <property type="entry name" value="ELM2_dom"/>
</dbReference>
<dbReference type="InterPro" id="IPR009057">
    <property type="entry name" value="Homeodomain-like_sf"/>
</dbReference>
<dbReference type="InterPro" id="IPR001005">
    <property type="entry name" value="SANT/Myb"/>
</dbReference>
<dbReference type="InterPro" id="IPR017884">
    <property type="entry name" value="SANT_dom"/>
</dbReference>
<dbReference type="InterPro" id="IPR051066">
    <property type="entry name" value="Trans_reg/Corepressor"/>
</dbReference>
<dbReference type="InterPro" id="IPR013087">
    <property type="entry name" value="Znf_C2H2_type"/>
</dbReference>
<dbReference type="PANTHER" id="PTHR16089">
    <property type="entry name" value="REST COREPRESSOR COREST PROTEIN-RELATED"/>
    <property type="match status" value="1"/>
</dbReference>
<dbReference type="PANTHER" id="PTHR16089:SF23">
    <property type="entry name" value="ZINC FINGER PROTEIN 541"/>
    <property type="match status" value="1"/>
</dbReference>
<dbReference type="Pfam" id="PF01448">
    <property type="entry name" value="ELM2"/>
    <property type="match status" value="1"/>
</dbReference>
<dbReference type="SMART" id="SM01189">
    <property type="entry name" value="ELM2"/>
    <property type="match status" value="1"/>
</dbReference>
<dbReference type="SMART" id="SM00717">
    <property type="entry name" value="SANT"/>
    <property type="match status" value="1"/>
</dbReference>
<dbReference type="SMART" id="SM00355">
    <property type="entry name" value="ZnF_C2H2"/>
    <property type="match status" value="2"/>
</dbReference>
<dbReference type="SUPFAM" id="SSF46689">
    <property type="entry name" value="Homeodomain-like"/>
    <property type="match status" value="1"/>
</dbReference>
<dbReference type="PROSITE" id="PS51156">
    <property type="entry name" value="ELM2"/>
    <property type="match status" value="1"/>
</dbReference>
<dbReference type="PROSITE" id="PS51293">
    <property type="entry name" value="SANT"/>
    <property type="match status" value="1"/>
</dbReference>
<dbReference type="PROSITE" id="PS00028">
    <property type="entry name" value="ZINC_FINGER_C2H2_1"/>
    <property type="match status" value="2"/>
</dbReference>
<dbReference type="PROSITE" id="PS50157">
    <property type="entry name" value="ZINC_FINGER_C2H2_2"/>
    <property type="match status" value="2"/>
</dbReference>
<organism>
    <name type="scientific">Macaca fascicularis</name>
    <name type="common">Crab-eating macaque</name>
    <name type="synonym">Cynomolgus monkey</name>
    <dbReference type="NCBI Taxonomy" id="9541"/>
    <lineage>
        <taxon>Eukaryota</taxon>
        <taxon>Metazoa</taxon>
        <taxon>Chordata</taxon>
        <taxon>Craniata</taxon>
        <taxon>Vertebrata</taxon>
        <taxon>Euteleostomi</taxon>
        <taxon>Mammalia</taxon>
        <taxon>Eutheria</taxon>
        <taxon>Euarchontoglires</taxon>
        <taxon>Primates</taxon>
        <taxon>Haplorrhini</taxon>
        <taxon>Catarrhini</taxon>
        <taxon>Cercopithecidae</taxon>
        <taxon>Cercopithecinae</taxon>
        <taxon>Macaca</taxon>
    </lineage>
</organism>